<reference key="1">
    <citation type="journal article" date="2007" name="Proc. Natl. Acad. Sci. U.S.A.">
        <title>Genome plasticity of BCG and impact on vaccine efficacy.</title>
        <authorList>
            <person name="Brosch R."/>
            <person name="Gordon S.V."/>
            <person name="Garnier T."/>
            <person name="Eiglmeier K."/>
            <person name="Frigui W."/>
            <person name="Valenti P."/>
            <person name="Dos Santos S."/>
            <person name="Duthoy S."/>
            <person name="Lacroix C."/>
            <person name="Garcia-Pelayo C."/>
            <person name="Inwald J.K."/>
            <person name="Golby P."/>
            <person name="Garcia J.N."/>
            <person name="Hewinson R.G."/>
            <person name="Behr M.A."/>
            <person name="Quail M.A."/>
            <person name="Churcher C."/>
            <person name="Barrell B.G."/>
            <person name="Parkhill J."/>
            <person name="Cole S.T."/>
        </authorList>
    </citation>
    <scope>NUCLEOTIDE SEQUENCE [LARGE SCALE GENOMIC DNA]</scope>
    <source>
        <strain>BCG / Pasteur 1173P2</strain>
    </source>
</reference>
<gene>
    <name evidence="1" type="primary">pnp</name>
    <name type="ordered locus">BCG_2801c</name>
</gene>
<evidence type="ECO:0000255" key="1">
    <source>
        <dbReference type="HAMAP-Rule" id="MF_01595"/>
    </source>
</evidence>
<feature type="chain" id="PRO_0000329717" description="Polyribonucleotide nucleotidyltransferase">
    <location>
        <begin position="1"/>
        <end position="752"/>
    </location>
</feature>
<feature type="domain" description="KH" evidence="1">
    <location>
        <begin position="595"/>
        <end position="654"/>
    </location>
</feature>
<feature type="domain" description="S1 motif" evidence="1">
    <location>
        <begin position="666"/>
        <end position="735"/>
    </location>
</feature>
<feature type="binding site" evidence="1">
    <location>
        <position position="529"/>
    </location>
    <ligand>
        <name>Mg(2+)</name>
        <dbReference type="ChEBI" id="CHEBI:18420"/>
    </ligand>
</feature>
<feature type="binding site" evidence="1">
    <location>
        <position position="535"/>
    </location>
    <ligand>
        <name>Mg(2+)</name>
        <dbReference type="ChEBI" id="CHEBI:18420"/>
    </ligand>
</feature>
<protein>
    <recommendedName>
        <fullName evidence="1">Polyribonucleotide nucleotidyltransferase</fullName>
        <ecNumber evidence="1">2.7.7.8</ecNumber>
    </recommendedName>
    <alternativeName>
        <fullName evidence="1">Polynucleotide phosphorylase</fullName>
        <shortName evidence="1">PNPase</shortName>
    </alternativeName>
</protein>
<organism>
    <name type="scientific">Mycobacterium bovis (strain BCG / Pasteur 1173P2)</name>
    <dbReference type="NCBI Taxonomy" id="410289"/>
    <lineage>
        <taxon>Bacteria</taxon>
        <taxon>Bacillati</taxon>
        <taxon>Actinomycetota</taxon>
        <taxon>Actinomycetes</taxon>
        <taxon>Mycobacteriales</taxon>
        <taxon>Mycobacteriaceae</taxon>
        <taxon>Mycobacterium</taxon>
        <taxon>Mycobacterium tuberculosis complex</taxon>
    </lineage>
</organism>
<dbReference type="EC" id="2.7.7.8" evidence="1"/>
<dbReference type="EMBL" id="AM408590">
    <property type="protein sequence ID" value="CAL72789.1"/>
    <property type="molecule type" value="Genomic_DNA"/>
</dbReference>
<dbReference type="RefSeq" id="WP_003414124.1">
    <property type="nucleotide sequence ID" value="NC_008769.1"/>
</dbReference>
<dbReference type="SMR" id="A1KMC6"/>
<dbReference type="KEGG" id="mbb:BCG_2801c"/>
<dbReference type="HOGENOM" id="CLU_004217_2_2_11"/>
<dbReference type="Proteomes" id="UP000001472">
    <property type="component" value="Chromosome"/>
</dbReference>
<dbReference type="GO" id="GO:0005829">
    <property type="term" value="C:cytosol"/>
    <property type="evidence" value="ECO:0007669"/>
    <property type="project" value="TreeGrafter"/>
</dbReference>
<dbReference type="GO" id="GO:0000175">
    <property type="term" value="F:3'-5'-RNA exonuclease activity"/>
    <property type="evidence" value="ECO:0007669"/>
    <property type="project" value="TreeGrafter"/>
</dbReference>
<dbReference type="GO" id="GO:0000287">
    <property type="term" value="F:magnesium ion binding"/>
    <property type="evidence" value="ECO:0007669"/>
    <property type="project" value="UniProtKB-UniRule"/>
</dbReference>
<dbReference type="GO" id="GO:0004654">
    <property type="term" value="F:polyribonucleotide nucleotidyltransferase activity"/>
    <property type="evidence" value="ECO:0007669"/>
    <property type="project" value="UniProtKB-UniRule"/>
</dbReference>
<dbReference type="GO" id="GO:0003723">
    <property type="term" value="F:RNA binding"/>
    <property type="evidence" value="ECO:0007669"/>
    <property type="project" value="UniProtKB-UniRule"/>
</dbReference>
<dbReference type="GO" id="GO:0006402">
    <property type="term" value="P:mRNA catabolic process"/>
    <property type="evidence" value="ECO:0007669"/>
    <property type="project" value="UniProtKB-UniRule"/>
</dbReference>
<dbReference type="GO" id="GO:0006396">
    <property type="term" value="P:RNA processing"/>
    <property type="evidence" value="ECO:0007669"/>
    <property type="project" value="InterPro"/>
</dbReference>
<dbReference type="CDD" id="cd02393">
    <property type="entry name" value="KH-I_PNPase"/>
    <property type="match status" value="1"/>
</dbReference>
<dbReference type="CDD" id="cd11364">
    <property type="entry name" value="RNase_PH_PNPase_2"/>
    <property type="match status" value="1"/>
</dbReference>
<dbReference type="CDD" id="cd04472">
    <property type="entry name" value="S1_PNPase"/>
    <property type="match status" value="1"/>
</dbReference>
<dbReference type="FunFam" id="2.40.50.140:FF:000069">
    <property type="entry name" value="Polyribonucleotide nucleotidyltransferase"/>
    <property type="match status" value="1"/>
</dbReference>
<dbReference type="FunFam" id="3.30.1370.10:FF:000001">
    <property type="entry name" value="Polyribonucleotide nucleotidyltransferase"/>
    <property type="match status" value="1"/>
</dbReference>
<dbReference type="FunFam" id="3.30.230.70:FF:000001">
    <property type="entry name" value="Polyribonucleotide nucleotidyltransferase"/>
    <property type="match status" value="1"/>
</dbReference>
<dbReference type="FunFam" id="3.30.230.70:FF:000002">
    <property type="entry name" value="Polyribonucleotide nucleotidyltransferase"/>
    <property type="match status" value="1"/>
</dbReference>
<dbReference type="Gene3D" id="3.30.230.70">
    <property type="entry name" value="GHMP Kinase, N-terminal domain"/>
    <property type="match status" value="2"/>
</dbReference>
<dbReference type="Gene3D" id="3.30.1370.10">
    <property type="entry name" value="K Homology domain, type 1"/>
    <property type="match status" value="1"/>
</dbReference>
<dbReference type="Gene3D" id="2.40.50.140">
    <property type="entry name" value="Nucleic acid-binding proteins"/>
    <property type="match status" value="1"/>
</dbReference>
<dbReference type="HAMAP" id="MF_01595">
    <property type="entry name" value="PNPase"/>
    <property type="match status" value="1"/>
</dbReference>
<dbReference type="InterPro" id="IPR001247">
    <property type="entry name" value="ExoRNase_PH_dom1"/>
</dbReference>
<dbReference type="InterPro" id="IPR036345">
    <property type="entry name" value="ExoRNase_PH_dom2_sf"/>
</dbReference>
<dbReference type="InterPro" id="IPR014069">
    <property type="entry name" value="GPSI/PNP"/>
</dbReference>
<dbReference type="InterPro" id="IPR004087">
    <property type="entry name" value="KH_dom"/>
</dbReference>
<dbReference type="InterPro" id="IPR004088">
    <property type="entry name" value="KH_dom_type_1"/>
</dbReference>
<dbReference type="InterPro" id="IPR036612">
    <property type="entry name" value="KH_dom_type_1_sf"/>
</dbReference>
<dbReference type="InterPro" id="IPR012340">
    <property type="entry name" value="NA-bd_OB-fold"/>
</dbReference>
<dbReference type="InterPro" id="IPR012162">
    <property type="entry name" value="PNPase"/>
</dbReference>
<dbReference type="InterPro" id="IPR027408">
    <property type="entry name" value="PNPase/RNase_PH_dom_sf"/>
</dbReference>
<dbReference type="InterPro" id="IPR015848">
    <property type="entry name" value="PNPase_PH_RNA-bd_bac/org-type"/>
</dbReference>
<dbReference type="InterPro" id="IPR036456">
    <property type="entry name" value="PNPase_PH_RNA-bd_sf"/>
</dbReference>
<dbReference type="InterPro" id="IPR020568">
    <property type="entry name" value="Ribosomal_Su5_D2-typ_SF"/>
</dbReference>
<dbReference type="InterPro" id="IPR003029">
    <property type="entry name" value="S1_domain"/>
</dbReference>
<dbReference type="NCBIfam" id="TIGR03591">
    <property type="entry name" value="polynuc_phos"/>
    <property type="match status" value="1"/>
</dbReference>
<dbReference type="NCBIfam" id="TIGR02696">
    <property type="entry name" value="pppGpp_PNP"/>
    <property type="match status" value="1"/>
</dbReference>
<dbReference type="NCBIfam" id="NF008805">
    <property type="entry name" value="PRK11824.1"/>
    <property type="match status" value="1"/>
</dbReference>
<dbReference type="PANTHER" id="PTHR11252">
    <property type="entry name" value="POLYRIBONUCLEOTIDE NUCLEOTIDYLTRANSFERASE"/>
    <property type="match status" value="1"/>
</dbReference>
<dbReference type="PANTHER" id="PTHR11252:SF0">
    <property type="entry name" value="POLYRIBONUCLEOTIDE NUCLEOTIDYLTRANSFERASE 1, MITOCHONDRIAL"/>
    <property type="match status" value="1"/>
</dbReference>
<dbReference type="Pfam" id="PF00013">
    <property type="entry name" value="KH_1"/>
    <property type="match status" value="1"/>
</dbReference>
<dbReference type="Pfam" id="PF03726">
    <property type="entry name" value="PNPase"/>
    <property type="match status" value="1"/>
</dbReference>
<dbReference type="Pfam" id="PF01138">
    <property type="entry name" value="RNase_PH"/>
    <property type="match status" value="2"/>
</dbReference>
<dbReference type="Pfam" id="PF00575">
    <property type="entry name" value="S1"/>
    <property type="match status" value="1"/>
</dbReference>
<dbReference type="PIRSF" id="PIRSF005499">
    <property type="entry name" value="PNPase"/>
    <property type="match status" value="1"/>
</dbReference>
<dbReference type="SMART" id="SM00322">
    <property type="entry name" value="KH"/>
    <property type="match status" value="1"/>
</dbReference>
<dbReference type="SMART" id="SM00316">
    <property type="entry name" value="S1"/>
    <property type="match status" value="1"/>
</dbReference>
<dbReference type="SUPFAM" id="SSF54791">
    <property type="entry name" value="Eukaryotic type KH-domain (KH-domain type I)"/>
    <property type="match status" value="1"/>
</dbReference>
<dbReference type="SUPFAM" id="SSF50249">
    <property type="entry name" value="Nucleic acid-binding proteins"/>
    <property type="match status" value="1"/>
</dbReference>
<dbReference type="SUPFAM" id="SSF46915">
    <property type="entry name" value="Polynucleotide phosphorylase/guanosine pentaphosphate synthase (PNPase/GPSI), domain 3"/>
    <property type="match status" value="1"/>
</dbReference>
<dbReference type="SUPFAM" id="SSF55666">
    <property type="entry name" value="Ribonuclease PH domain 2-like"/>
    <property type="match status" value="2"/>
</dbReference>
<dbReference type="SUPFAM" id="SSF54211">
    <property type="entry name" value="Ribosomal protein S5 domain 2-like"/>
    <property type="match status" value="2"/>
</dbReference>
<dbReference type="PROSITE" id="PS50084">
    <property type="entry name" value="KH_TYPE_1"/>
    <property type="match status" value="1"/>
</dbReference>
<dbReference type="PROSITE" id="PS50126">
    <property type="entry name" value="S1"/>
    <property type="match status" value="1"/>
</dbReference>
<sequence length="752" mass="79735">MSAAEIDEGVFETTATIDNGSFGTRTIRFETGRLALQAAGAVVAYLDDDNMLLSATTASKNPKEHFDFFPLTVDVEERMYAAGRIPGSFFRREGRPSTDAILTCRLIDRPLRPSFVDGLRNEIQIVVTILSLDPGDLYDVLAINAASASTQLGGLPFSGPIGGVRVALIDGTWVGFPTVDQIERAVFDMVVAGRIVEGDVAIMMVEAEATENVVELVEGGAQAPTESVVAAGLEAAKPFIAALCTAQQELADAAGKSGKPTVDFPVFPDYGEDVYYSVSSVATDELAAALTIGGKAERDQRIDEIKTQVVQRLADTYEGREKEVGAALRALTKKLVRQRILTDHFRIDGRGITDIRALSAEVAVVPRAHGSALFERGETQILGVTTLDMIKMAQQIDSLGPETSKRYMHHYNFPPFSTGETGRVGSPKRREIGHGALAERALVPVLPSVEEFPYAIRQVSEALGSNGSTSMGSVCASTLALLNAGVPLKAPVAGIAMGLVSDDIQVEGAVDGVVERRFVTLTDILGAEDAFGDMDFKVAGTKDFVTALQLDTKLDGIPSQVLAGALEQAKDARLTILEVMAEAIDRPDEMSPYAPRVTTIKVPVDKIGEVIGPKGKVINAITEETGAQISIEDDGTVFVGATDGPSAQAAIDKINAIANPQLPTVGERFLGTVVKTTDFGAFVSLLPGRDGLVHISKLGKGKRIAKVEDVVNVGDKLRVEIADIDKRGKISLILVADEDSTAAATDAATVTS</sequence>
<comment type="function">
    <text evidence="1">Involved in mRNA degradation. Catalyzes the phosphorolysis of single-stranded polyribonucleotides processively in the 3'- to 5'-direction.</text>
</comment>
<comment type="catalytic activity">
    <reaction evidence="1">
        <text>RNA(n+1) + phosphate = RNA(n) + a ribonucleoside 5'-diphosphate</text>
        <dbReference type="Rhea" id="RHEA:22096"/>
        <dbReference type="Rhea" id="RHEA-COMP:14527"/>
        <dbReference type="Rhea" id="RHEA-COMP:17342"/>
        <dbReference type="ChEBI" id="CHEBI:43474"/>
        <dbReference type="ChEBI" id="CHEBI:57930"/>
        <dbReference type="ChEBI" id="CHEBI:140395"/>
        <dbReference type="EC" id="2.7.7.8"/>
    </reaction>
</comment>
<comment type="cofactor">
    <cofactor evidence="1">
        <name>Mg(2+)</name>
        <dbReference type="ChEBI" id="CHEBI:18420"/>
    </cofactor>
</comment>
<comment type="subcellular location">
    <subcellularLocation>
        <location evidence="1">Cytoplasm</location>
    </subcellularLocation>
</comment>
<comment type="similarity">
    <text evidence="1">Belongs to the polyribonucleotide nucleotidyltransferase family.</text>
</comment>
<keyword id="KW-0963">Cytoplasm</keyword>
<keyword id="KW-0460">Magnesium</keyword>
<keyword id="KW-0479">Metal-binding</keyword>
<keyword id="KW-0548">Nucleotidyltransferase</keyword>
<keyword id="KW-0694">RNA-binding</keyword>
<keyword id="KW-0808">Transferase</keyword>
<name>PNP_MYCBP</name>
<accession>A1KMC6</accession>
<proteinExistence type="inferred from homology"/>